<keyword id="KW-0007">Acetylation</keyword>
<keyword id="KW-0963">Cytoplasm</keyword>
<keyword id="KW-0328">Glycosyltransferase</keyword>
<keyword id="KW-0597">Phosphoprotein</keyword>
<keyword id="KW-0660">Purine salvage</keyword>
<keyword id="KW-0808">Transferase</keyword>
<sequence length="180" mass="19709">MSEPELQLVARRIRSFPDFPVQGVLFRDISPLLKDPVSFRASIHLLASHLKSTHSGKIDYIAGLDSRGFLFGPSLAQELGVGCVLIRKRGKLPGPTLSASYALEYGKAELEIQKDALEPGQRVVIVDDLLATGGTMCAACELLNQLRAEVVECVSLVELTSLKGRERLGPIPYFSLLQYE</sequence>
<gene>
    <name evidence="1" type="primary">APRT</name>
</gene>
<proteinExistence type="inferred from homology"/>
<reference key="1">
    <citation type="journal article" date="1997" name="Heredity">
        <title>Substitution rate variation in closely related rodent species.</title>
        <authorList>
            <person name="Fieldhouse D."/>
            <person name="Yazdani F."/>
            <person name="Golding G.B."/>
        </authorList>
    </citation>
    <scope>NUCLEOTIDE SEQUENCE [GENOMIC DNA]</scope>
</reference>
<dbReference type="EC" id="2.4.2.7" evidence="1"/>
<dbReference type="EMBL" id="U28723">
    <property type="protein sequence ID" value="AAA68959.1"/>
    <property type="molecule type" value="Genomic_DNA"/>
</dbReference>
<dbReference type="SMR" id="P47958"/>
<dbReference type="UniPathway" id="UPA00588">
    <property type="reaction ID" value="UER00646"/>
</dbReference>
<dbReference type="GO" id="GO:0005737">
    <property type="term" value="C:cytoplasm"/>
    <property type="evidence" value="ECO:0007669"/>
    <property type="project" value="UniProtKB-SubCell"/>
</dbReference>
<dbReference type="GO" id="GO:0002055">
    <property type="term" value="F:adenine binding"/>
    <property type="evidence" value="ECO:0007669"/>
    <property type="project" value="TreeGrafter"/>
</dbReference>
<dbReference type="GO" id="GO:0003999">
    <property type="term" value="F:adenine phosphoribosyltransferase activity"/>
    <property type="evidence" value="ECO:0000250"/>
    <property type="project" value="UniProtKB"/>
</dbReference>
<dbReference type="GO" id="GO:0016208">
    <property type="term" value="F:AMP binding"/>
    <property type="evidence" value="ECO:0007669"/>
    <property type="project" value="TreeGrafter"/>
</dbReference>
<dbReference type="GO" id="GO:0006168">
    <property type="term" value="P:adenine salvage"/>
    <property type="evidence" value="ECO:0007669"/>
    <property type="project" value="InterPro"/>
</dbReference>
<dbReference type="GO" id="GO:0044209">
    <property type="term" value="P:AMP salvage"/>
    <property type="evidence" value="ECO:0007669"/>
    <property type="project" value="UniProtKB-UniPathway"/>
</dbReference>
<dbReference type="GO" id="GO:0006166">
    <property type="term" value="P:purine ribonucleoside salvage"/>
    <property type="evidence" value="ECO:0007669"/>
    <property type="project" value="UniProtKB-KW"/>
</dbReference>
<dbReference type="CDD" id="cd06223">
    <property type="entry name" value="PRTases_typeI"/>
    <property type="match status" value="1"/>
</dbReference>
<dbReference type="FunFam" id="3.40.50.2020:FF:000123">
    <property type="entry name" value="Adenine phosphoribosyltransferase"/>
    <property type="match status" value="1"/>
</dbReference>
<dbReference type="Gene3D" id="3.40.50.2020">
    <property type="match status" value="1"/>
</dbReference>
<dbReference type="HAMAP" id="MF_00004">
    <property type="entry name" value="Aden_phosphoribosyltr"/>
    <property type="match status" value="1"/>
</dbReference>
<dbReference type="InterPro" id="IPR005764">
    <property type="entry name" value="Ade_phspho_trans"/>
</dbReference>
<dbReference type="InterPro" id="IPR000836">
    <property type="entry name" value="PRibTrfase_dom"/>
</dbReference>
<dbReference type="InterPro" id="IPR029057">
    <property type="entry name" value="PRTase-like"/>
</dbReference>
<dbReference type="InterPro" id="IPR050054">
    <property type="entry name" value="UPRTase/APRTase"/>
</dbReference>
<dbReference type="NCBIfam" id="TIGR01090">
    <property type="entry name" value="apt"/>
    <property type="match status" value="1"/>
</dbReference>
<dbReference type="NCBIfam" id="NF002634">
    <property type="entry name" value="PRK02304.1-3"/>
    <property type="match status" value="1"/>
</dbReference>
<dbReference type="NCBIfam" id="NF002636">
    <property type="entry name" value="PRK02304.1-5"/>
    <property type="match status" value="1"/>
</dbReference>
<dbReference type="PANTHER" id="PTHR32315">
    <property type="entry name" value="ADENINE PHOSPHORIBOSYLTRANSFERASE"/>
    <property type="match status" value="1"/>
</dbReference>
<dbReference type="PANTHER" id="PTHR32315:SF3">
    <property type="entry name" value="ADENINE PHOSPHORIBOSYLTRANSFERASE"/>
    <property type="match status" value="1"/>
</dbReference>
<dbReference type="Pfam" id="PF00156">
    <property type="entry name" value="Pribosyltran"/>
    <property type="match status" value="1"/>
</dbReference>
<dbReference type="SUPFAM" id="SSF53271">
    <property type="entry name" value="PRTase-like"/>
    <property type="match status" value="1"/>
</dbReference>
<dbReference type="PROSITE" id="PS00103">
    <property type="entry name" value="PUR_PYR_PR_TRANSFER"/>
    <property type="match status" value="1"/>
</dbReference>
<accession>P47958</accession>
<name>APT_STOLO</name>
<evidence type="ECO:0000250" key="1">
    <source>
        <dbReference type="UniProtKB" id="P07741"/>
    </source>
</evidence>
<evidence type="ECO:0000250" key="2">
    <source>
        <dbReference type="UniProtKB" id="P36972"/>
    </source>
</evidence>
<evidence type="ECO:0000305" key="3"/>
<feature type="initiator methionine" description="Removed" evidence="2">
    <location>
        <position position="1"/>
    </location>
</feature>
<feature type="chain" id="PRO_0000149510" description="Adenine phosphoribosyltransferase">
    <location>
        <begin position="2"/>
        <end position="180"/>
    </location>
</feature>
<feature type="modified residue" description="N-acetylserine" evidence="2">
    <location>
        <position position="2"/>
    </location>
</feature>
<feature type="modified residue" description="Phosphoserine" evidence="1">
    <location>
        <position position="15"/>
    </location>
</feature>
<feature type="modified residue" description="Phosphoserine" evidence="1">
    <location>
        <position position="30"/>
    </location>
</feature>
<feature type="modified residue" description="Phosphotyrosine" evidence="1">
    <location>
        <position position="60"/>
    </location>
</feature>
<feature type="modified residue" description="Phosphoserine" evidence="1">
    <location>
        <position position="66"/>
    </location>
</feature>
<feature type="modified residue" description="N6-acetyllysine" evidence="1">
    <location>
        <position position="114"/>
    </location>
</feature>
<feature type="modified residue" description="Phosphothreonine" evidence="1">
    <location>
        <position position="135"/>
    </location>
</feature>
<organism>
    <name type="scientific">Stochomys longicaudatus</name>
    <name type="common">Target rat</name>
    <dbReference type="NCBI Taxonomy" id="34856"/>
    <lineage>
        <taxon>Eukaryota</taxon>
        <taxon>Metazoa</taxon>
        <taxon>Chordata</taxon>
        <taxon>Craniata</taxon>
        <taxon>Vertebrata</taxon>
        <taxon>Euteleostomi</taxon>
        <taxon>Mammalia</taxon>
        <taxon>Eutheria</taxon>
        <taxon>Euarchontoglires</taxon>
        <taxon>Glires</taxon>
        <taxon>Rodentia</taxon>
        <taxon>Myomorpha</taxon>
        <taxon>Muroidea</taxon>
        <taxon>Muridae</taxon>
        <taxon>Murinae</taxon>
        <taxon>Stochomys</taxon>
    </lineage>
</organism>
<comment type="function">
    <text evidence="1">Catalyzes a salvage reaction resulting in the formation of AMP, that is energically less costly than de novo synthesis.</text>
</comment>
<comment type="catalytic activity">
    <reaction evidence="1">
        <text>AMP + diphosphate = 5-phospho-alpha-D-ribose 1-diphosphate + adenine</text>
        <dbReference type="Rhea" id="RHEA:16609"/>
        <dbReference type="ChEBI" id="CHEBI:16708"/>
        <dbReference type="ChEBI" id="CHEBI:33019"/>
        <dbReference type="ChEBI" id="CHEBI:58017"/>
        <dbReference type="ChEBI" id="CHEBI:456215"/>
        <dbReference type="EC" id="2.4.2.7"/>
    </reaction>
</comment>
<comment type="pathway">
    <text evidence="1">Purine metabolism; AMP biosynthesis via salvage pathway; AMP from adenine: step 1/1.</text>
</comment>
<comment type="subunit">
    <text>Homodimer.</text>
</comment>
<comment type="subcellular location">
    <subcellularLocation>
        <location>Cytoplasm</location>
    </subcellularLocation>
</comment>
<comment type="similarity">
    <text evidence="3">Belongs to the purine/pyrimidine phosphoribosyltransferase family.</text>
</comment>
<protein>
    <recommendedName>
        <fullName evidence="1">Adenine phosphoribosyltransferase</fullName>
        <shortName>APRT</shortName>
        <ecNumber evidence="1">2.4.2.7</ecNumber>
    </recommendedName>
</protein>